<organism>
    <name type="scientific">Saccharomyces cerevisiae (strain ATCC 204508 / S288c)</name>
    <name type="common">Baker's yeast</name>
    <dbReference type="NCBI Taxonomy" id="559292"/>
    <lineage>
        <taxon>Eukaryota</taxon>
        <taxon>Fungi</taxon>
        <taxon>Dikarya</taxon>
        <taxon>Ascomycota</taxon>
        <taxon>Saccharomycotina</taxon>
        <taxon>Saccharomycetes</taxon>
        <taxon>Saccharomycetales</taxon>
        <taxon>Saccharomycetaceae</taxon>
        <taxon>Saccharomyces</taxon>
    </lineage>
</organism>
<proteinExistence type="evidence at protein level"/>
<accession>Q12496</accession>
<accession>D6W1W9</accession>
<keyword id="KW-1185">Reference proteome</keyword>
<evidence type="ECO:0000269" key="1">
    <source>
    </source>
</evidence>
<comment type="miscellaneous">
    <text evidence="1">Present with 8120 molecules/cell in log phase SD medium.</text>
</comment>
<name>YO098_YEAST</name>
<protein>
    <recommendedName>
        <fullName>Uncharacterized protein YOL098C</fullName>
    </recommendedName>
</protein>
<gene>
    <name type="ordered locus">YOL098C</name>
    <name type="ORF">HRF1037</name>
</gene>
<feature type="chain" id="PRO_0000178013" description="Uncharacterized protein YOL098C">
    <location>
        <begin position="1"/>
        <end position="1037"/>
    </location>
</feature>
<dbReference type="EMBL" id="Z48149">
    <property type="protein sequence ID" value="CAA88163.1"/>
    <property type="molecule type" value="Genomic_DNA"/>
</dbReference>
<dbReference type="EMBL" id="Z74840">
    <property type="protein sequence ID" value="CAA99111.1"/>
    <property type="molecule type" value="Genomic_DNA"/>
</dbReference>
<dbReference type="EMBL" id="BK006948">
    <property type="protein sequence ID" value="DAA10685.1"/>
    <property type="molecule type" value="Genomic_DNA"/>
</dbReference>
<dbReference type="PIR" id="S51900">
    <property type="entry name" value="S51900"/>
</dbReference>
<dbReference type="SMR" id="Q12496"/>
<dbReference type="BioGRID" id="34304">
    <property type="interactions" value="114"/>
</dbReference>
<dbReference type="DIP" id="DIP-6651N"/>
<dbReference type="FunCoup" id="Q12496">
    <property type="interactions" value="200"/>
</dbReference>
<dbReference type="IntAct" id="Q12496">
    <property type="interactions" value="17"/>
</dbReference>
<dbReference type="MINT" id="Q12496"/>
<dbReference type="STRING" id="4932.YOL098C"/>
<dbReference type="MEROPS" id="M16.A04"/>
<dbReference type="iPTMnet" id="Q12496"/>
<dbReference type="PaxDb" id="4932-YOL098C"/>
<dbReference type="PeptideAtlas" id="Q12496"/>
<dbReference type="TopDownProteomics" id="Q12496"/>
<dbReference type="EnsemblFungi" id="YOL098C_mRNA">
    <property type="protein sequence ID" value="YOL098C"/>
    <property type="gene ID" value="YOL098C"/>
</dbReference>
<dbReference type="KEGG" id="sce:YOL098C"/>
<dbReference type="AGR" id="SGD:S000005458"/>
<dbReference type="SGD" id="S000005458">
    <property type="gene designation" value="YOL098C"/>
</dbReference>
<dbReference type="VEuPathDB" id="FungiDB:YOL098C"/>
<dbReference type="eggNOG" id="KOG0961">
    <property type="taxonomic scope" value="Eukaryota"/>
</dbReference>
<dbReference type="HOGENOM" id="CLU_006065_0_0_1"/>
<dbReference type="InParanoid" id="Q12496"/>
<dbReference type="OMA" id="CVEGPFW"/>
<dbReference type="OrthoDB" id="4953at2759"/>
<dbReference type="BioCyc" id="YEAST:G3O-33497-MONOMER"/>
<dbReference type="BioGRID-ORCS" id="854055">
    <property type="hits" value="0 hits in 10 CRISPR screens"/>
</dbReference>
<dbReference type="PRO" id="PR:Q12496"/>
<dbReference type="Proteomes" id="UP000002311">
    <property type="component" value="Chromosome XV"/>
</dbReference>
<dbReference type="RNAct" id="Q12496">
    <property type="molecule type" value="protein"/>
</dbReference>
<dbReference type="GO" id="GO:0005737">
    <property type="term" value="C:cytoplasm"/>
    <property type="evidence" value="ECO:0007005"/>
    <property type="project" value="SGD"/>
</dbReference>
<dbReference type="GO" id="GO:0046872">
    <property type="term" value="F:metal ion binding"/>
    <property type="evidence" value="ECO:0007669"/>
    <property type="project" value="InterPro"/>
</dbReference>
<dbReference type="FunFam" id="3.30.830.10:FF:000015">
    <property type="entry name" value="Putative zinc metalloprotease"/>
    <property type="match status" value="1"/>
</dbReference>
<dbReference type="FunFam" id="3.30.830.10:FF:000031">
    <property type="entry name" value="Putative zinc metalloprotease"/>
    <property type="match status" value="1"/>
</dbReference>
<dbReference type="FunFam" id="3.30.830.10:FF:000077">
    <property type="entry name" value="YOL098Cp-like protein"/>
    <property type="match status" value="1"/>
</dbReference>
<dbReference type="Gene3D" id="3.30.830.10">
    <property type="entry name" value="Metalloenzyme, LuxS/M16 peptidase-like"/>
    <property type="match status" value="3"/>
</dbReference>
<dbReference type="InterPro" id="IPR011249">
    <property type="entry name" value="Metalloenz_LuxS/M16"/>
</dbReference>
<dbReference type="InterPro" id="IPR011765">
    <property type="entry name" value="Pept_M16_N"/>
</dbReference>
<dbReference type="InterPro" id="IPR007863">
    <property type="entry name" value="Peptidase_M16_C"/>
</dbReference>
<dbReference type="PANTHER" id="PTHR43016:SF16">
    <property type="entry name" value="METALLOPROTEASE, PUTATIVE (AFU_ORTHOLOGUE AFUA_4G07610)-RELATED"/>
    <property type="match status" value="1"/>
</dbReference>
<dbReference type="PANTHER" id="PTHR43016">
    <property type="entry name" value="PRESEQUENCE PROTEASE"/>
    <property type="match status" value="1"/>
</dbReference>
<dbReference type="Pfam" id="PF00675">
    <property type="entry name" value="Peptidase_M16"/>
    <property type="match status" value="1"/>
</dbReference>
<dbReference type="Pfam" id="PF05193">
    <property type="entry name" value="Peptidase_M16_C"/>
    <property type="match status" value="1"/>
</dbReference>
<dbReference type="SUPFAM" id="SSF63411">
    <property type="entry name" value="LuxS/MPP-like metallohydrolase"/>
    <property type="match status" value="3"/>
</dbReference>
<sequence length="1037" mass="118392">MGFKKLVSFQPDYVPQYHITKYISERTKLQLVHINHKTSPLVHGYFAVPTECLNDSGAPHTLEHLIFMGSKSYPYKGLLDTAGNLSLSNTNAWTDTDQTVYTLSSAGWKGFSKLLPAYLDHILHPTLTDEACLTEVYHIDPENLGDKGVVFSEMEAIETQGWYISGLEKQRLMFPEGSGYRSETGGLTKNLRTLTNDEIRQFHKSLYSSDNLCVIVCGNVPTDELLTVMEEWDNKLPEIPSNIPKKRPFLDNKLSHIPQSRDKVTESTVEFPELDESQGELLFSWIGVPYSDFRNDLAVDVLLDYFTDSALAVFTRELVEIDDPMANSTDCCTDYFMRTIIDLRIQGVPTEKIAATKTKVLEILKTHTIDLSRVRQVVENTKWEYLLNYEKNGESRFSSAVITDYIYGNEDGSSLVSSLKDLSDFDALLQWSQKDWQSLLNRIFVDNKPIIVTAKPSALMYEQLEKEKSDLIKQREAEFDDEKKLVLLKRLNNAKNINDRPIPKSLLQKFEIDNPSKSVEFVNTKSIATVDSYKYNNVSDPLTKKILETRPDNFPLFIHLNHFPSQFIELHFLVNSASIKDTSLLPYFNMFDELFSMPMKILDEESNVETMLSFEEVVAKLKSETIDAQINQGLKGSCPDLINFKIQCRAGGYSNSVQWIKHCLFDMVFDENRVRILLENYLNSIVEWKRNGNVMLSSLTNRNLYSARSLKKSTDPLFVEAKLQEIFAEIENGNFEKEILPRIETMRKQLRANFNKFHILVLGDISKIDDVYEPWNPLIKCLNIAHPVEKLKIPPVPRALDTISSICRTPGEKAFIITTPASESAYMNLITSIPFNLDYHDPEYAIVSLASEYLECVEGPFWKGIRGAGLAYGASMLKLCEINSWGFNIYRGADIIKCYEVGKQIVQDYASGALEFDEQLIQGAISSIINRLATIECGYFETALSKYVDEFCLQRGNNFNELYLERLQNVTKTDLKNAMQKYFVNMFDSNKSVAFVSCHPAKLESVQEFFETQGFTVEIEELEDDDDEIDSEEDENA</sequence>
<reference key="1">
    <citation type="journal article" date="1995" name="Yeast">
        <title>Sequence analysis of a 44 kb DNA fragment of yeast chromosome XV including the Ty1-H3 retrotransposon, the suf1(+) frameshift suppressor gene for tRNA-Gly, the yeast transfer RNA-Thr-1a and a delta element.</title>
        <authorList>
            <person name="Vandenbol M."/>
            <person name="Durand P."/>
            <person name="Portetelle D."/>
            <person name="Hilger F."/>
        </authorList>
    </citation>
    <scope>NUCLEOTIDE SEQUENCE [GENOMIC DNA]</scope>
</reference>
<reference key="2">
    <citation type="journal article" date="1997" name="Nature">
        <title>The nucleotide sequence of Saccharomyces cerevisiae chromosome XV.</title>
        <authorList>
            <person name="Dujon B."/>
            <person name="Albermann K."/>
            <person name="Aldea M."/>
            <person name="Alexandraki D."/>
            <person name="Ansorge W."/>
            <person name="Arino J."/>
            <person name="Benes V."/>
            <person name="Bohn C."/>
            <person name="Bolotin-Fukuhara M."/>
            <person name="Bordonne R."/>
            <person name="Boyer J."/>
            <person name="Camasses A."/>
            <person name="Casamayor A."/>
            <person name="Casas C."/>
            <person name="Cheret G."/>
            <person name="Cziepluch C."/>
            <person name="Daignan-Fornier B."/>
            <person name="Dang V.-D."/>
            <person name="de Haan M."/>
            <person name="Delius H."/>
            <person name="Durand P."/>
            <person name="Fairhead C."/>
            <person name="Feldmann H."/>
            <person name="Gaillon L."/>
            <person name="Galisson F."/>
            <person name="Gamo F.-J."/>
            <person name="Gancedo C."/>
            <person name="Goffeau A."/>
            <person name="Goulding S.E."/>
            <person name="Grivell L.A."/>
            <person name="Habbig B."/>
            <person name="Hand N.J."/>
            <person name="Hani J."/>
            <person name="Hattenhorst U."/>
            <person name="Hebling U."/>
            <person name="Hernando Y."/>
            <person name="Herrero E."/>
            <person name="Heumann K."/>
            <person name="Hiesel R."/>
            <person name="Hilger F."/>
            <person name="Hofmann B."/>
            <person name="Hollenberg C.P."/>
            <person name="Hughes B."/>
            <person name="Jauniaux J.-C."/>
            <person name="Kalogeropoulos A."/>
            <person name="Katsoulou C."/>
            <person name="Kordes E."/>
            <person name="Lafuente M.J."/>
            <person name="Landt O."/>
            <person name="Louis E.J."/>
            <person name="Maarse A.C."/>
            <person name="Madania A."/>
            <person name="Mannhaupt G."/>
            <person name="Marck C."/>
            <person name="Martin R.P."/>
            <person name="Mewes H.-W."/>
            <person name="Michaux G."/>
            <person name="Paces V."/>
            <person name="Parle-McDermott A.G."/>
            <person name="Pearson B.M."/>
            <person name="Perrin A."/>
            <person name="Pettersson B."/>
            <person name="Poch O."/>
            <person name="Pohl T.M."/>
            <person name="Poirey R."/>
            <person name="Portetelle D."/>
            <person name="Pujol A."/>
            <person name="Purnelle B."/>
            <person name="Ramezani Rad M."/>
            <person name="Rechmann S."/>
            <person name="Schwager C."/>
            <person name="Schweizer M."/>
            <person name="Sor F."/>
            <person name="Sterky F."/>
            <person name="Tarassov I.A."/>
            <person name="Teodoru C."/>
            <person name="Tettelin H."/>
            <person name="Thierry A."/>
            <person name="Tobiasch E."/>
            <person name="Tzermia M."/>
            <person name="Uhlen M."/>
            <person name="Unseld M."/>
            <person name="Valens M."/>
            <person name="Vandenbol M."/>
            <person name="Vetter I."/>
            <person name="Vlcek C."/>
            <person name="Voet M."/>
            <person name="Volckaert G."/>
            <person name="Voss H."/>
            <person name="Wambutt R."/>
            <person name="Wedler H."/>
            <person name="Wiemann S."/>
            <person name="Winsor B."/>
            <person name="Wolfe K.H."/>
            <person name="Zollner A."/>
            <person name="Zumstein E."/>
            <person name="Kleine K."/>
        </authorList>
    </citation>
    <scope>NUCLEOTIDE SEQUENCE [LARGE SCALE GENOMIC DNA]</scope>
    <source>
        <strain>ATCC 204508 / S288c</strain>
    </source>
</reference>
<reference key="3">
    <citation type="journal article" date="2014" name="G3 (Bethesda)">
        <title>The reference genome sequence of Saccharomyces cerevisiae: Then and now.</title>
        <authorList>
            <person name="Engel S.R."/>
            <person name="Dietrich F.S."/>
            <person name="Fisk D.G."/>
            <person name="Binkley G."/>
            <person name="Balakrishnan R."/>
            <person name="Costanzo M.C."/>
            <person name="Dwight S.S."/>
            <person name="Hitz B.C."/>
            <person name="Karra K."/>
            <person name="Nash R.S."/>
            <person name="Weng S."/>
            <person name="Wong E.D."/>
            <person name="Lloyd P."/>
            <person name="Skrzypek M.S."/>
            <person name="Miyasato S.R."/>
            <person name="Simison M."/>
            <person name="Cherry J.M."/>
        </authorList>
    </citation>
    <scope>GENOME REANNOTATION</scope>
    <source>
        <strain>ATCC 204508 / S288c</strain>
    </source>
</reference>
<reference key="4">
    <citation type="journal article" date="2003" name="Nature">
        <title>Global analysis of protein expression in yeast.</title>
        <authorList>
            <person name="Ghaemmaghami S."/>
            <person name="Huh W.-K."/>
            <person name="Bower K."/>
            <person name="Howson R.W."/>
            <person name="Belle A."/>
            <person name="Dephoure N."/>
            <person name="O'Shea E.K."/>
            <person name="Weissman J.S."/>
        </authorList>
    </citation>
    <scope>LEVEL OF PROTEIN EXPRESSION [LARGE SCALE ANALYSIS]</scope>
</reference>